<evidence type="ECO:0000250" key="1"/>
<evidence type="ECO:0000269" key="2">
    <source>
    </source>
</evidence>
<evidence type="ECO:0000305" key="3"/>
<feature type="chain" id="PRO_0000185982" description="Glutathione S-transferase">
    <location>
        <begin position="1"/>
        <end position="220"/>
    </location>
</feature>
<feature type="domain" description="GST N-terminal">
    <location>
        <begin position="1"/>
        <end position="77"/>
    </location>
</feature>
<feature type="domain" description="GST C-terminal">
    <location>
        <begin position="82"/>
        <end position="211"/>
    </location>
</feature>
<feature type="binding site" evidence="1">
    <location>
        <position position="12"/>
    </location>
    <ligand>
        <name>glutathione</name>
        <dbReference type="ChEBI" id="CHEBI:57925"/>
    </ligand>
</feature>
<feature type="binding site" evidence="1">
    <location>
        <position position="49"/>
    </location>
    <ligand>
        <name>glutathione</name>
        <dbReference type="ChEBI" id="CHEBI:57925"/>
    </ligand>
</feature>
<feature type="binding site" evidence="1">
    <location>
        <begin position="61"/>
        <end position="62"/>
    </location>
    <ligand>
        <name>glutathione</name>
        <dbReference type="ChEBI" id="CHEBI:57925"/>
    </ligand>
</feature>
<comment type="function">
    <text evidence="2">Conjugation of reduced glutathione to a wide number of exogenous and endogenous hydrophobic electrophiles.</text>
</comment>
<comment type="catalytic activity">
    <reaction evidence="2">
        <text>RX + glutathione = an S-substituted glutathione + a halide anion + H(+)</text>
        <dbReference type="Rhea" id="RHEA:16437"/>
        <dbReference type="ChEBI" id="CHEBI:15378"/>
        <dbReference type="ChEBI" id="CHEBI:16042"/>
        <dbReference type="ChEBI" id="CHEBI:17792"/>
        <dbReference type="ChEBI" id="CHEBI:57925"/>
        <dbReference type="ChEBI" id="CHEBI:90779"/>
        <dbReference type="EC" id="2.5.1.18"/>
    </reaction>
</comment>
<comment type="subunit">
    <text evidence="2">Monomer and homodimer.</text>
</comment>
<comment type="subcellular location">
    <subcellularLocation>
        <location evidence="2">Cytoplasm</location>
    </subcellularLocation>
</comment>
<comment type="similarity">
    <text evidence="3">Belongs to the GST superfamily.</text>
</comment>
<dbReference type="EC" id="2.5.1.18"/>
<dbReference type="EMBL" id="CP000712">
    <property type="protein sequence ID" value="ABQ76380.1"/>
    <property type="molecule type" value="Genomic_DNA"/>
</dbReference>
<dbReference type="SMR" id="P82998"/>
<dbReference type="KEGG" id="ppf:Pput_0205"/>
<dbReference type="eggNOG" id="COG0625">
    <property type="taxonomic scope" value="Bacteria"/>
</dbReference>
<dbReference type="HOGENOM" id="CLU_011226_9_3_6"/>
<dbReference type="GO" id="GO:0005737">
    <property type="term" value="C:cytoplasm"/>
    <property type="evidence" value="ECO:0000303"/>
    <property type="project" value="UniProtKB"/>
</dbReference>
<dbReference type="GO" id="GO:0004364">
    <property type="term" value="F:glutathione transferase activity"/>
    <property type="evidence" value="ECO:0000303"/>
    <property type="project" value="UniProtKB"/>
</dbReference>
<dbReference type="CDD" id="cd10424">
    <property type="entry name" value="GST_C_9"/>
    <property type="match status" value="1"/>
</dbReference>
<dbReference type="CDD" id="cd00570">
    <property type="entry name" value="GST_N_family"/>
    <property type="match status" value="1"/>
</dbReference>
<dbReference type="Gene3D" id="1.20.1050.10">
    <property type="match status" value="1"/>
</dbReference>
<dbReference type="Gene3D" id="3.40.30.10">
    <property type="entry name" value="Glutaredoxin"/>
    <property type="match status" value="1"/>
</dbReference>
<dbReference type="InterPro" id="IPR010987">
    <property type="entry name" value="Glutathione-S-Trfase_C-like"/>
</dbReference>
<dbReference type="InterPro" id="IPR036282">
    <property type="entry name" value="Glutathione-S-Trfase_C_sf"/>
</dbReference>
<dbReference type="InterPro" id="IPR040079">
    <property type="entry name" value="Glutathione_S-Trfase"/>
</dbReference>
<dbReference type="InterPro" id="IPR004045">
    <property type="entry name" value="Glutathione_S-Trfase_N"/>
</dbReference>
<dbReference type="InterPro" id="IPR004046">
    <property type="entry name" value="GST_C"/>
</dbReference>
<dbReference type="InterPro" id="IPR050983">
    <property type="entry name" value="GST_Omega/HSP26"/>
</dbReference>
<dbReference type="InterPro" id="IPR036249">
    <property type="entry name" value="Thioredoxin-like_sf"/>
</dbReference>
<dbReference type="PANTHER" id="PTHR43968">
    <property type="match status" value="1"/>
</dbReference>
<dbReference type="PANTHER" id="PTHR43968:SF6">
    <property type="entry name" value="GLUTATHIONE S-TRANSFERASE OMEGA"/>
    <property type="match status" value="1"/>
</dbReference>
<dbReference type="Pfam" id="PF00043">
    <property type="entry name" value="GST_C"/>
    <property type="match status" value="1"/>
</dbReference>
<dbReference type="Pfam" id="PF13417">
    <property type="entry name" value="GST_N_3"/>
    <property type="match status" value="1"/>
</dbReference>
<dbReference type="SFLD" id="SFLDS00019">
    <property type="entry name" value="Glutathione_Transferase_(cytos"/>
    <property type="match status" value="1"/>
</dbReference>
<dbReference type="SFLD" id="SFLDG00358">
    <property type="entry name" value="Main_(cytGST)"/>
    <property type="match status" value="1"/>
</dbReference>
<dbReference type="SUPFAM" id="SSF47616">
    <property type="entry name" value="GST C-terminal domain-like"/>
    <property type="match status" value="1"/>
</dbReference>
<dbReference type="SUPFAM" id="SSF52833">
    <property type="entry name" value="Thioredoxin-like"/>
    <property type="match status" value="1"/>
</dbReference>
<dbReference type="PROSITE" id="PS50405">
    <property type="entry name" value="GST_CTER"/>
    <property type="match status" value="1"/>
</dbReference>
<dbReference type="PROSITE" id="PS50404">
    <property type="entry name" value="GST_NTER"/>
    <property type="match status" value="1"/>
</dbReference>
<sequence>MLKLHGFSVSNYYNMVKLALLEKGLPFEEVTFYGGQAPQALEVSPRGKVPVLETEHGFLSETSVILDYIEQTQSGKALLPADPFEQAKVRELLKEIELYIELPARTCYAESFFGMSVEPLIKEKARADLLAGFATLKRNGRFAPYVAGEQLTLADLMFCFSVDLANAVGKKVLSIDFLADFPQAKALLQLMGENPHMARIMADKEASMPAFMEMIRSGKR</sequence>
<gene>
    <name type="ordered locus">Pput_0205</name>
</gene>
<proteinExistence type="evidence at protein level"/>
<organism>
    <name type="scientific">Pseudomonas putida (strain ATCC 700007 / DSM 6899 / JCM 31910 / BCRC 17059 / LMG 24140 / F1)</name>
    <dbReference type="NCBI Taxonomy" id="351746"/>
    <lineage>
        <taxon>Bacteria</taxon>
        <taxon>Pseudomonadati</taxon>
        <taxon>Pseudomonadota</taxon>
        <taxon>Gammaproteobacteria</taxon>
        <taxon>Pseudomonadales</taxon>
        <taxon>Pseudomonadaceae</taxon>
        <taxon>Pseudomonas</taxon>
    </lineage>
</organism>
<keyword id="KW-0963">Cytoplasm</keyword>
<keyword id="KW-0903">Direct protein sequencing</keyword>
<keyword id="KW-0808">Transferase</keyword>
<reference key="1">
    <citation type="submission" date="2007-05" db="EMBL/GenBank/DDBJ databases">
        <title>Complete sequence of Pseudomonas putida F1.</title>
        <authorList>
            <consortium name="US DOE Joint Genome Institute"/>
            <person name="Copeland A."/>
            <person name="Lucas S."/>
            <person name="Lapidus A."/>
            <person name="Barry K."/>
            <person name="Detter J.C."/>
            <person name="Glavina del Rio T."/>
            <person name="Hammon N."/>
            <person name="Israni S."/>
            <person name="Dalin E."/>
            <person name="Tice H."/>
            <person name="Pitluck S."/>
            <person name="Chain P."/>
            <person name="Malfatti S."/>
            <person name="Shin M."/>
            <person name="Vergez L."/>
            <person name="Schmutz J."/>
            <person name="Larimer F."/>
            <person name="Land M."/>
            <person name="Hauser L."/>
            <person name="Kyrpides N."/>
            <person name="Lykidis A."/>
            <person name="Parales R."/>
            <person name="Richardson P."/>
        </authorList>
    </citation>
    <scope>NUCLEOTIDE SEQUENCE [LARGE SCALE GENOMIC DNA]</scope>
    <source>
        <strain>ATCC 700007 / DSM 6899 / JCM 31910 / BCRC 17059 / LMG 24140 / F1</strain>
    </source>
</reference>
<reference evidence="3" key="2">
    <citation type="journal article" date="2002" name="Res. Microbiol.">
        <title>Occurrence and properties of glutathione S-transferases in phenol-degrading Pseudomonas strains.</title>
        <authorList>
            <person name="Santos P.M."/>
            <person name="Mignogna G."/>
            <person name="Heipieper H.J."/>
            <person name="Zennaro E."/>
        </authorList>
    </citation>
    <scope>PROTEIN SEQUENCE OF 1-21</scope>
    <scope>FUNCTION</scope>
    <scope>CATALYTIC ACTIVITY</scope>
    <scope>SUBUNIT</scope>
    <scope>SUBCELLULAR LOCATION</scope>
</reference>
<accession>P82998</accession>
<accession>A5VWX0</accession>
<name>GSTE_PSEP1</name>
<protein>
    <recommendedName>
        <fullName>Glutathione S-transferase</fullName>
        <ecNumber>2.5.1.18</ecNumber>
    </recommendedName>
</protein>